<name>VT4_SHEVN</name>
<reference key="1">
    <citation type="journal article" date="1989" name="Virology">
        <title>A capripoxvirus pseudogene whose only intact homologs are in other poxvirus genomes.</title>
        <authorList>
            <person name="Gershon P.D."/>
            <person name="Black D.N."/>
        </authorList>
    </citation>
    <scope>NUCLEOTIDE SEQUENCE [GENOMIC DNA]</scope>
</reference>
<proteinExistence type="inferred from homology"/>
<accession>P18385</accession>
<organism>
    <name type="scientific">Sheeppox virus (strain InS-1)</name>
    <name type="common">SPPV</name>
    <name type="synonym">Capripoxvirus (strain InS-1)</name>
    <dbReference type="NCBI Taxonomy" id="10268"/>
    <lineage>
        <taxon>Viruses</taxon>
        <taxon>Varidnaviria</taxon>
        <taxon>Bamfordvirae</taxon>
        <taxon>Nucleocytoviricota</taxon>
        <taxon>Pokkesviricetes</taxon>
        <taxon>Chitovirales</taxon>
        <taxon>Poxviridae</taxon>
        <taxon>Chordopoxvirinae</taxon>
        <taxon>Capripoxvirus</taxon>
        <taxon>Sheeppox virus</taxon>
    </lineage>
</organism>
<sequence>MSSLTFFIFCLQLFIFTSTVSGISIKRCTEEENNTWEIEVGLCIQTENFRAIKTGCYKIQGPGGLLTEGNGFKIFAHDDCSKEKTQNNFILDSVNEAVYALGKYVYMEISTSNITTLNSLPQCAKRISLSISCDQVTTEMKSYVESVSFKDYDLEFVITTDISCVKHVSSSVIVRNECEKKYISTGKKIFGFNNKIDCSAVKFSEHVNYLKTCSVGKFDRKKYYEHQHNYIKKIFHHNEL</sequence>
<dbReference type="EMBL" id="M28823">
    <property type="protein sequence ID" value="AAC32902.1"/>
    <property type="molecule type" value="Genomic_DNA"/>
</dbReference>
<dbReference type="PIR" id="B33869">
    <property type="entry name" value="WMVZN2"/>
</dbReference>
<dbReference type="SMR" id="P18385"/>
<dbReference type="Gene3D" id="2.60.240.30">
    <property type="match status" value="1"/>
</dbReference>
<dbReference type="InterPro" id="IPR016399">
    <property type="entry name" value="Apoptosis_reg_M-T4"/>
</dbReference>
<dbReference type="InterPro" id="IPR038687">
    <property type="entry name" value="M-T4_sf"/>
</dbReference>
<dbReference type="InterPro" id="IPR007579">
    <property type="entry name" value="Poxvirus_T4p_C"/>
</dbReference>
<dbReference type="InterPro" id="IPR007580">
    <property type="entry name" value="Poxvirus_T4p_N"/>
</dbReference>
<dbReference type="Pfam" id="PF04490">
    <property type="entry name" value="Pox_T4_C"/>
    <property type="match status" value="1"/>
</dbReference>
<dbReference type="Pfam" id="PF04491">
    <property type="entry name" value="Pox_T4_N"/>
    <property type="match status" value="1"/>
</dbReference>
<dbReference type="PIRSF" id="PIRSF003796">
    <property type="entry name" value="Apoptosisregulator_M-T4"/>
    <property type="match status" value="1"/>
</dbReference>
<gene>
    <name type="ORF">T4</name>
</gene>
<protein>
    <recommendedName>
        <fullName>T4 protein</fullName>
    </recommendedName>
</protein>
<organismHost>
    <name type="scientific">Ovis aries</name>
    <name type="common">Sheep</name>
    <dbReference type="NCBI Taxonomy" id="9940"/>
</organismHost>
<comment type="similarity">
    <text evidence="1">Belongs to the poxviruses B9 family.</text>
</comment>
<feature type="chain" id="PRO_0000099359" description="T4 protein">
    <location>
        <begin position="1"/>
        <end position="240"/>
    </location>
</feature>
<evidence type="ECO:0000305" key="1"/>